<proteinExistence type="inferred from homology"/>
<reference key="1">
    <citation type="journal article" date="2012" name="Stand. Genomic Sci.">
        <title>Complete genome sequence of Polynucleobacter necessarius subsp. asymbioticus type strain (QLW-P1DMWA-1(T)).</title>
        <authorList>
            <person name="Meincke L."/>
            <person name="Copeland A."/>
            <person name="Lapidus A."/>
            <person name="Lucas S."/>
            <person name="Berry K.W."/>
            <person name="Del Rio T.G."/>
            <person name="Hammon N."/>
            <person name="Dalin E."/>
            <person name="Tice H."/>
            <person name="Pitluck S."/>
            <person name="Richardson P."/>
            <person name="Bruce D."/>
            <person name="Goodwin L."/>
            <person name="Han C."/>
            <person name="Tapia R."/>
            <person name="Detter J.C."/>
            <person name="Schmutz J."/>
            <person name="Brettin T."/>
            <person name="Larimer F."/>
            <person name="Land M."/>
            <person name="Hauser L."/>
            <person name="Kyrpides N.C."/>
            <person name="Ivanova N."/>
            <person name="Goker M."/>
            <person name="Woyke T."/>
            <person name="Wu Q.L."/>
            <person name="Pockl M."/>
            <person name="Hahn M.W."/>
            <person name="Klenk H.P."/>
        </authorList>
    </citation>
    <scope>NUCLEOTIDE SEQUENCE [LARGE SCALE GENOMIC DNA]</scope>
    <source>
        <strain>DSM 18221 / CIP 109841 / QLW-P1DMWA-1</strain>
    </source>
</reference>
<gene>
    <name evidence="1" type="primary">obg</name>
    <name type="ordered locus">Pnuc_0196</name>
</gene>
<protein>
    <recommendedName>
        <fullName evidence="1">GTPase Obg</fullName>
        <ecNumber evidence="1">3.6.5.-</ecNumber>
    </recommendedName>
    <alternativeName>
        <fullName evidence="1">GTP-binding protein Obg</fullName>
    </alternativeName>
</protein>
<accession>A4SVA3</accession>
<keyword id="KW-0963">Cytoplasm</keyword>
<keyword id="KW-0342">GTP-binding</keyword>
<keyword id="KW-0378">Hydrolase</keyword>
<keyword id="KW-0460">Magnesium</keyword>
<keyword id="KW-0479">Metal-binding</keyword>
<keyword id="KW-0547">Nucleotide-binding</keyword>
<keyword id="KW-1185">Reference proteome</keyword>
<organism>
    <name type="scientific">Polynucleobacter asymbioticus (strain DSM 18221 / CIP 109841 / QLW-P1DMWA-1)</name>
    <name type="common">Polynucleobacter necessarius subsp. asymbioticus</name>
    <dbReference type="NCBI Taxonomy" id="312153"/>
    <lineage>
        <taxon>Bacteria</taxon>
        <taxon>Pseudomonadati</taxon>
        <taxon>Pseudomonadota</taxon>
        <taxon>Betaproteobacteria</taxon>
        <taxon>Burkholderiales</taxon>
        <taxon>Burkholderiaceae</taxon>
        <taxon>Polynucleobacter</taxon>
    </lineage>
</organism>
<dbReference type="EC" id="3.6.5.-" evidence="1"/>
<dbReference type="EMBL" id="CP000655">
    <property type="protein sequence ID" value="ABP33417.1"/>
    <property type="molecule type" value="Genomic_DNA"/>
</dbReference>
<dbReference type="RefSeq" id="WP_011902042.1">
    <property type="nucleotide sequence ID" value="NC_009379.1"/>
</dbReference>
<dbReference type="SMR" id="A4SVA3"/>
<dbReference type="GeneID" id="31480545"/>
<dbReference type="KEGG" id="pnu:Pnuc_0196"/>
<dbReference type="eggNOG" id="COG0536">
    <property type="taxonomic scope" value="Bacteria"/>
</dbReference>
<dbReference type="HOGENOM" id="CLU_011747_2_0_4"/>
<dbReference type="Proteomes" id="UP000000231">
    <property type="component" value="Chromosome"/>
</dbReference>
<dbReference type="GO" id="GO:0005737">
    <property type="term" value="C:cytoplasm"/>
    <property type="evidence" value="ECO:0007669"/>
    <property type="project" value="UniProtKB-SubCell"/>
</dbReference>
<dbReference type="GO" id="GO:0005525">
    <property type="term" value="F:GTP binding"/>
    <property type="evidence" value="ECO:0007669"/>
    <property type="project" value="UniProtKB-UniRule"/>
</dbReference>
<dbReference type="GO" id="GO:0003924">
    <property type="term" value="F:GTPase activity"/>
    <property type="evidence" value="ECO:0007669"/>
    <property type="project" value="UniProtKB-UniRule"/>
</dbReference>
<dbReference type="GO" id="GO:0000287">
    <property type="term" value="F:magnesium ion binding"/>
    <property type="evidence" value="ECO:0007669"/>
    <property type="project" value="InterPro"/>
</dbReference>
<dbReference type="GO" id="GO:0042254">
    <property type="term" value="P:ribosome biogenesis"/>
    <property type="evidence" value="ECO:0007669"/>
    <property type="project" value="UniProtKB-UniRule"/>
</dbReference>
<dbReference type="CDD" id="cd01898">
    <property type="entry name" value="Obg"/>
    <property type="match status" value="1"/>
</dbReference>
<dbReference type="FunFam" id="2.70.210.12:FF:000001">
    <property type="entry name" value="GTPase Obg"/>
    <property type="match status" value="1"/>
</dbReference>
<dbReference type="Gene3D" id="2.70.210.12">
    <property type="entry name" value="GTP1/OBG domain"/>
    <property type="match status" value="1"/>
</dbReference>
<dbReference type="Gene3D" id="3.40.50.300">
    <property type="entry name" value="P-loop containing nucleotide triphosphate hydrolases"/>
    <property type="match status" value="1"/>
</dbReference>
<dbReference type="HAMAP" id="MF_01454">
    <property type="entry name" value="GTPase_Obg"/>
    <property type="match status" value="1"/>
</dbReference>
<dbReference type="InterPro" id="IPR031167">
    <property type="entry name" value="G_OBG"/>
</dbReference>
<dbReference type="InterPro" id="IPR006073">
    <property type="entry name" value="GTP-bd"/>
</dbReference>
<dbReference type="InterPro" id="IPR014100">
    <property type="entry name" value="GTP-bd_Obg/CgtA"/>
</dbReference>
<dbReference type="InterPro" id="IPR006074">
    <property type="entry name" value="GTP1-OBG_CS"/>
</dbReference>
<dbReference type="InterPro" id="IPR006169">
    <property type="entry name" value="GTP1_OBG_dom"/>
</dbReference>
<dbReference type="InterPro" id="IPR036726">
    <property type="entry name" value="GTP1_OBG_dom_sf"/>
</dbReference>
<dbReference type="InterPro" id="IPR045086">
    <property type="entry name" value="OBG_GTPase"/>
</dbReference>
<dbReference type="InterPro" id="IPR027417">
    <property type="entry name" value="P-loop_NTPase"/>
</dbReference>
<dbReference type="NCBIfam" id="TIGR02729">
    <property type="entry name" value="Obg_CgtA"/>
    <property type="match status" value="1"/>
</dbReference>
<dbReference type="NCBIfam" id="NF008954">
    <property type="entry name" value="PRK12296.1"/>
    <property type="match status" value="1"/>
</dbReference>
<dbReference type="NCBIfam" id="NF008955">
    <property type="entry name" value="PRK12297.1"/>
    <property type="match status" value="1"/>
</dbReference>
<dbReference type="NCBIfam" id="NF008956">
    <property type="entry name" value="PRK12299.1"/>
    <property type="match status" value="1"/>
</dbReference>
<dbReference type="PANTHER" id="PTHR11702">
    <property type="entry name" value="DEVELOPMENTALLY REGULATED GTP-BINDING PROTEIN-RELATED"/>
    <property type="match status" value="1"/>
</dbReference>
<dbReference type="PANTHER" id="PTHR11702:SF31">
    <property type="entry name" value="MITOCHONDRIAL RIBOSOME-ASSOCIATED GTPASE 2"/>
    <property type="match status" value="1"/>
</dbReference>
<dbReference type="Pfam" id="PF01018">
    <property type="entry name" value="GTP1_OBG"/>
    <property type="match status" value="1"/>
</dbReference>
<dbReference type="Pfam" id="PF01926">
    <property type="entry name" value="MMR_HSR1"/>
    <property type="match status" value="1"/>
</dbReference>
<dbReference type="PIRSF" id="PIRSF002401">
    <property type="entry name" value="GTP_bd_Obg/CgtA"/>
    <property type="match status" value="1"/>
</dbReference>
<dbReference type="PRINTS" id="PR00326">
    <property type="entry name" value="GTP1OBG"/>
</dbReference>
<dbReference type="SUPFAM" id="SSF82051">
    <property type="entry name" value="Obg GTP-binding protein N-terminal domain"/>
    <property type="match status" value="1"/>
</dbReference>
<dbReference type="SUPFAM" id="SSF52540">
    <property type="entry name" value="P-loop containing nucleoside triphosphate hydrolases"/>
    <property type="match status" value="1"/>
</dbReference>
<dbReference type="PROSITE" id="PS51710">
    <property type="entry name" value="G_OBG"/>
    <property type="match status" value="1"/>
</dbReference>
<dbReference type="PROSITE" id="PS00905">
    <property type="entry name" value="GTP1_OBG"/>
    <property type="match status" value="1"/>
</dbReference>
<dbReference type="PROSITE" id="PS51883">
    <property type="entry name" value="OBG"/>
    <property type="match status" value="1"/>
</dbReference>
<sequence>MKFIDEARIEVIAGQGGSGSASMRREKFIEFGGPDGGDGGKGGSVWATADRNINTLIDYRYAKTHTAKNGEPGRGADCYGRAGDDIELRMPVGTIISDYETGEPIADLTTHGERLCLAQGGVGGWGNIHFKSSTNRAPRQKTNGKEGERRKLKLELKVLADVGLLGMPNAGKSTLITAVSNARPKIADYPFTTLHPNLGVVRVGNERSFVIADIPGLIEGAAEGAGLGHRFLRHLQRTGVLLHLVDIAPFDENIDPVADAVAIVNELRKYDEALVEKPRWLVLNKVDMIPEEDRKKVVADFIKRFKWKGPVFEISALTGLGCDKLCYALQDYLDSVRRDRDDAEERAADPRYQDQAADKSPD</sequence>
<comment type="function">
    <text evidence="1">An essential GTPase which binds GTP, GDP and possibly (p)ppGpp with moderate affinity, with high nucleotide exchange rates and a fairly low GTP hydrolysis rate. Plays a role in control of the cell cycle, stress response, ribosome biogenesis and in those bacteria that undergo differentiation, in morphogenesis control.</text>
</comment>
<comment type="cofactor">
    <cofactor evidence="1">
        <name>Mg(2+)</name>
        <dbReference type="ChEBI" id="CHEBI:18420"/>
    </cofactor>
</comment>
<comment type="subunit">
    <text evidence="1">Monomer.</text>
</comment>
<comment type="subcellular location">
    <subcellularLocation>
        <location evidence="1">Cytoplasm</location>
    </subcellularLocation>
</comment>
<comment type="similarity">
    <text evidence="1">Belongs to the TRAFAC class OBG-HflX-like GTPase superfamily. OBG GTPase family.</text>
</comment>
<feature type="chain" id="PRO_0000386128" description="GTPase Obg">
    <location>
        <begin position="1"/>
        <end position="362"/>
    </location>
</feature>
<feature type="domain" description="Obg" evidence="2">
    <location>
        <begin position="1"/>
        <end position="159"/>
    </location>
</feature>
<feature type="domain" description="OBG-type G" evidence="1">
    <location>
        <begin position="160"/>
        <end position="334"/>
    </location>
</feature>
<feature type="region of interest" description="Disordered" evidence="3">
    <location>
        <begin position="129"/>
        <end position="148"/>
    </location>
</feature>
<feature type="region of interest" description="Disordered" evidence="3">
    <location>
        <begin position="340"/>
        <end position="362"/>
    </location>
</feature>
<feature type="compositionally biased region" description="Polar residues" evidence="3">
    <location>
        <begin position="130"/>
        <end position="141"/>
    </location>
</feature>
<feature type="binding site" evidence="1">
    <location>
        <begin position="166"/>
        <end position="173"/>
    </location>
    <ligand>
        <name>GTP</name>
        <dbReference type="ChEBI" id="CHEBI:37565"/>
    </ligand>
</feature>
<feature type="binding site" evidence="1">
    <location>
        <position position="173"/>
    </location>
    <ligand>
        <name>Mg(2+)</name>
        <dbReference type="ChEBI" id="CHEBI:18420"/>
    </ligand>
</feature>
<feature type="binding site" evidence="1">
    <location>
        <begin position="191"/>
        <end position="195"/>
    </location>
    <ligand>
        <name>GTP</name>
        <dbReference type="ChEBI" id="CHEBI:37565"/>
    </ligand>
</feature>
<feature type="binding site" evidence="1">
    <location>
        <position position="193"/>
    </location>
    <ligand>
        <name>Mg(2+)</name>
        <dbReference type="ChEBI" id="CHEBI:18420"/>
    </ligand>
</feature>
<feature type="binding site" evidence="1">
    <location>
        <begin position="213"/>
        <end position="216"/>
    </location>
    <ligand>
        <name>GTP</name>
        <dbReference type="ChEBI" id="CHEBI:37565"/>
    </ligand>
</feature>
<feature type="binding site" evidence="1">
    <location>
        <begin position="284"/>
        <end position="287"/>
    </location>
    <ligand>
        <name>GTP</name>
        <dbReference type="ChEBI" id="CHEBI:37565"/>
    </ligand>
</feature>
<feature type="binding site" evidence="1">
    <location>
        <begin position="315"/>
        <end position="317"/>
    </location>
    <ligand>
        <name>GTP</name>
        <dbReference type="ChEBI" id="CHEBI:37565"/>
    </ligand>
</feature>
<name>OBG_POLAQ</name>
<evidence type="ECO:0000255" key="1">
    <source>
        <dbReference type="HAMAP-Rule" id="MF_01454"/>
    </source>
</evidence>
<evidence type="ECO:0000255" key="2">
    <source>
        <dbReference type="PROSITE-ProRule" id="PRU01231"/>
    </source>
</evidence>
<evidence type="ECO:0000256" key="3">
    <source>
        <dbReference type="SAM" id="MobiDB-lite"/>
    </source>
</evidence>